<reference key="1">
    <citation type="journal article" date="1997" name="Nature">
        <title>The nucleotide sequence of Saccharomyces cerevisiae chromosome XIII.</title>
        <authorList>
            <person name="Bowman S."/>
            <person name="Churcher C.M."/>
            <person name="Badcock K."/>
            <person name="Brown D."/>
            <person name="Chillingworth T."/>
            <person name="Connor R."/>
            <person name="Dedman K."/>
            <person name="Devlin K."/>
            <person name="Gentles S."/>
            <person name="Hamlin N."/>
            <person name="Hunt S."/>
            <person name="Jagels K."/>
            <person name="Lye G."/>
            <person name="Moule S."/>
            <person name="Odell C."/>
            <person name="Pearson D."/>
            <person name="Rajandream M.A."/>
            <person name="Rice P."/>
            <person name="Skelton J."/>
            <person name="Walsh S.V."/>
            <person name="Whitehead S."/>
            <person name="Barrell B.G."/>
        </authorList>
    </citation>
    <scope>NUCLEOTIDE SEQUENCE [LARGE SCALE GENOMIC DNA]</scope>
    <source>
        <strain>ATCC 204508 / S288c</strain>
    </source>
</reference>
<reference key="2">
    <citation type="journal article" date="2014" name="G3 (Bethesda)">
        <title>The reference genome sequence of Saccharomyces cerevisiae: Then and now.</title>
        <authorList>
            <person name="Engel S.R."/>
            <person name="Dietrich F.S."/>
            <person name="Fisk D.G."/>
            <person name="Binkley G."/>
            <person name="Balakrishnan R."/>
            <person name="Costanzo M.C."/>
            <person name="Dwight S.S."/>
            <person name="Hitz B.C."/>
            <person name="Karra K."/>
            <person name="Nash R.S."/>
            <person name="Weng S."/>
            <person name="Wong E.D."/>
            <person name="Lloyd P."/>
            <person name="Skrzypek M.S."/>
            <person name="Miyasato S.R."/>
            <person name="Simison M."/>
            <person name="Cherry J.M."/>
        </authorList>
    </citation>
    <scope>GENOME REANNOTATION</scope>
    <source>
        <strain>ATCC 204508 / S288c</strain>
    </source>
</reference>
<reference key="3">
    <citation type="journal article" date="2007" name="Genome Res.">
        <title>Approaching a complete repository of sequence-verified protein-encoding clones for Saccharomyces cerevisiae.</title>
        <authorList>
            <person name="Hu Y."/>
            <person name="Rolfs A."/>
            <person name="Bhullar B."/>
            <person name="Murthy T.V.S."/>
            <person name="Zhu C."/>
            <person name="Berger M.F."/>
            <person name="Camargo A.A."/>
            <person name="Kelley F."/>
            <person name="McCarron S."/>
            <person name="Jepson D."/>
            <person name="Richardson A."/>
            <person name="Raphael J."/>
            <person name="Moreira D."/>
            <person name="Taycher E."/>
            <person name="Zuo D."/>
            <person name="Mohr S."/>
            <person name="Kane M.F."/>
            <person name="Williamson J."/>
            <person name="Simpson A.J.G."/>
            <person name="Bulyk M.L."/>
            <person name="Harlow E."/>
            <person name="Marsischky G."/>
            <person name="Kolodner R.D."/>
            <person name="LaBaer J."/>
        </authorList>
    </citation>
    <scope>NUCLEOTIDE SEQUENCE [GENOMIC DNA]</scope>
    <source>
        <strain>ATCC 204508 / S288c</strain>
    </source>
</reference>
<reference key="4">
    <citation type="journal article" date="2004" name="Biochemistry">
        <title>Sml1p is a dimer in solution: characterization of denaturation and renaturation of recombinant Sml1p.</title>
        <authorList>
            <person name="Gupta V."/>
            <person name="Peterson C.B."/>
            <person name="Dice L.T."/>
            <person name="Uchiki T."/>
            <person name="Racca J."/>
            <person name="Guo J.T."/>
            <person name="Xu Y."/>
            <person name="Hettich R."/>
            <person name="Zhao X."/>
            <person name="Rothstein R."/>
            <person name="Dealwis C.G."/>
        </authorList>
    </citation>
    <scope>PROTEIN SEQUENCE OF 1-7</scope>
    <scope>INTERCHAIN DISULFIDE BOND</scope>
</reference>
<reference key="5">
    <citation type="journal article" date="1999" name="J. Biol. Chem.">
        <title>Yeast Sml1, a protein inhibitor of ribonucleotide reductase.</title>
        <authorList>
            <person name="Chabes A."/>
            <person name="Domkin V."/>
            <person name="Thelander L."/>
        </authorList>
    </citation>
    <scope>FUNCTION</scope>
    <scope>INTERACTION WITH RNR1</scope>
</reference>
<reference key="6">
    <citation type="journal article" date="2002" name="Proc. Natl. Acad. Sci. U.S.A.">
        <title>The Dun1 checkpoint kinase phosphorylates and regulates the ribonucleotide reductase inhibitor Sml1.</title>
        <authorList>
            <person name="Zhao X."/>
            <person name="Rothstein R."/>
        </authorList>
    </citation>
    <scope>REGULATION BY DUN1</scope>
</reference>
<reference key="7">
    <citation type="journal article" date="2003" name="Nature">
        <title>Global analysis of protein expression in yeast.</title>
        <authorList>
            <person name="Ghaemmaghami S."/>
            <person name="Huh W.-K."/>
            <person name="Bower K."/>
            <person name="Howson R.W."/>
            <person name="Belle A."/>
            <person name="Dephoure N."/>
            <person name="O'Shea E.K."/>
            <person name="Weissman J.S."/>
        </authorList>
    </citation>
    <scope>LEVEL OF PROTEIN EXPRESSION [LARGE SCALE ANALYSIS]</scope>
</reference>
<reference key="8">
    <citation type="journal article" date="2004" name="J. Biol. Chem.">
        <title>Identification of phosphorylation sites on the yeast ribonucleotide reductase inhibitor Sml1.</title>
        <authorList>
            <person name="Uchiki T."/>
            <person name="Dice L.T."/>
            <person name="Hettich R.L."/>
            <person name="Dealwis C."/>
        </authorList>
    </citation>
    <scope>PHOSPHORYLATION AT SER-56; SER-58 AND SER-60</scope>
</reference>
<reference key="9">
    <citation type="journal article" date="2010" name="Nucleic Acids Res.">
        <title>The ribonucleotide reductase inhibitor, Sml1, is sequentially phosphorylated, ubiquitylated and degraded in response to DNA damage.</title>
        <authorList>
            <person name="Andreson B.L."/>
            <person name="Gupta A."/>
            <person name="Georgieva B.P."/>
            <person name="Rothstein R."/>
        </authorList>
    </citation>
    <scope>FUNCTION</scope>
    <scope>SUBCELLULAR LOCATION</scope>
    <scope>DEVELOPMENTAL STAGE</scope>
    <scope>PHOSPHORYLATION</scope>
    <scope>UBIQUITINATION</scope>
    <scope>MUTAGENESIS OF 56-SER--SER-61</scope>
</reference>
<reference key="10">
    <citation type="journal article" date="2012" name="Proc. Natl. Acad. Sci. U.S.A.">
        <title>N-terminal acetylome analyses and functional insights of the N-terminal acetyltransferase NatB.</title>
        <authorList>
            <person name="Van Damme P."/>
            <person name="Lasa M."/>
            <person name="Polevoda B."/>
            <person name="Gazquez C."/>
            <person name="Elosegui-Artola A."/>
            <person name="Kim D.S."/>
            <person name="De Juan-Pardo E."/>
            <person name="Demeyer K."/>
            <person name="Hole K."/>
            <person name="Larrea E."/>
            <person name="Timmerman E."/>
            <person name="Prieto J."/>
            <person name="Arnesen T."/>
            <person name="Sherman F."/>
            <person name="Gevaert K."/>
            <person name="Aldabe R."/>
        </authorList>
    </citation>
    <scope>ACETYLATION [LARGE SCALE ANALYSIS] AT MET-1</scope>
    <scope>IDENTIFICATION BY MASS SPECTROMETRY [LARGE SCALE ANALYSIS]</scope>
</reference>
<sequence>MQNSQDYFYAQNRCQQQQAPSTLRTVTMAEFRRVPLPPMAEVPMLSTQNSMGSSASASASSLEMWEKDLEERLNSIDHDMNNNKFGSGELKSMFNQGKVEEMDF</sequence>
<evidence type="ECO:0000256" key="1">
    <source>
        <dbReference type="SAM" id="MobiDB-lite"/>
    </source>
</evidence>
<evidence type="ECO:0000269" key="2">
    <source>
    </source>
</evidence>
<evidence type="ECO:0000269" key="3">
    <source>
    </source>
</evidence>
<evidence type="ECO:0000269" key="4">
    <source>
    </source>
</evidence>
<evidence type="ECO:0000269" key="5">
    <source>
    </source>
</evidence>
<evidence type="ECO:0007744" key="6">
    <source>
    </source>
</evidence>
<protein>
    <recommendedName>
        <fullName>Ribonucleotide reductase inhibitor protein SML1</fullName>
    </recommendedName>
</protein>
<proteinExistence type="evidence at protein level"/>
<keyword id="KW-0007">Acetylation</keyword>
<keyword id="KW-0131">Cell cycle</keyword>
<keyword id="KW-0963">Cytoplasm</keyword>
<keyword id="KW-0903">Direct protein sequencing</keyword>
<keyword id="KW-1015">Disulfide bond</keyword>
<keyword id="KW-0227">DNA damage</keyword>
<keyword id="KW-0236">DNA replication inhibitor</keyword>
<keyword id="KW-0539">Nucleus</keyword>
<keyword id="KW-0597">Phosphoprotein</keyword>
<keyword id="KW-1185">Reference proteome</keyword>
<keyword id="KW-0832">Ubl conjugation</keyword>
<name>SML1_YEAST</name>
<comment type="function">
    <text evidence="2 5">Strong inhibitor of ribonucleotide reductase (RNR1) and is involved in regulating dNTP production.</text>
</comment>
<comment type="subunit">
    <text evidence="2">Homodimer; disulfide-linked. Interacts with RNR1.</text>
</comment>
<comment type="interaction">
    <interactant intactId="EBI-27834">
        <id>Q04964</id>
    </interactant>
    <interactant intactId="EBI-15234">
        <id>P21524</id>
        <label>RNR1</label>
    </interactant>
    <organismsDiffer>false</organismsDiffer>
    <experiments>4</experiments>
</comment>
<comment type="subcellular location">
    <subcellularLocation>
        <location evidence="5">Nucleus</location>
    </subcellularLocation>
    <subcellularLocation>
        <location evidence="5">Cytoplasm</location>
    </subcellularLocation>
</comment>
<comment type="developmental stage">
    <text evidence="5">Levels decrease during S phase.</text>
</comment>
<comment type="PTM">
    <text evidence="4 5">Phosphorylated by DUN1, a downstream effector of the Mec1/Rad53 checkpoint pathway, in response to DNA damage. This promotes ubiquitination of SML1 and targets it for degradation by the 26S proteasome.</text>
</comment>
<comment type="miscellaneous">
    <text evidence="3">Present with 18800 molecules/cell in log phase SD medium.</text>
</comment>
<accession>Q04964</accession>
<accession>D6VZB6</accession>
<gene>
    <name type="primary">SML1</name>
    <name type="ordered locus">YML058W</name>
    <name type="ORF">YM9958.04</name>
</gene>
<dbReference type="EMBL" id="Z46729">
    <property type="protein sequence ID" value="CAA86717.1"/>
    <property type="molecule type" value="Genomic_DNA"/>
</dbReference>
<dbReference type="EMBL" id="AY557961">
    <property type="protein sequence ID" value="AAS56287.1"/>
    <property type="molecule type" value="Genomic_DNA"/>
</dbReference>
<dbReference type="EMBL" id="BK006946">
    <property type="protein sequence ID" value="DAA09840.1"/>
    <property type="molecule type" value="Genomic_DNA"/>
</dbReference>
<dbReference type="PIR" id="S49803">
    <property type="entry name" value="S49803"/>
</dbReference>
<dbReference type="RefSeq" id="NP_013653.1">
    <property type="nucleotide sequence ID" value="NM_001182417.1"/>
</dbReference>
<dbReference type="BMRB" id="Q04964"/>
<dbReference type="BioGRID" id="35109">
    <property type="interactions" value="163"/>
</dbReference>
<dbReference type="DIP" id="DIP-2734N"/>
<dbReference type="FunCoup" id="Q04964">
    <property type="interactions" value="89"/>
</dbReference>
<dbReference type="IntAct" id="Q04964">
    <property type="interactions" value="25"/>
</dbReference>
<dbReference type="MINT" id="Q04964"/>
<dbReference type="STRING" id="4932.YML058W"/>
<dbReference type="iPTMnet" id="Q04964"/>
<dbReference type="PaxDb" id="4932-YML058W"/>
<dbReference type="PeptideAtlas" id="Q04964"/>
<dbReference type="EnsemblFungi" id="YML058W_mRNA">
    <property type="protein sequence ID" value="YML058W"/>
    <property type="gene ID" value="YML058W"/>
</dbReference>
<dbReference type="GeneID" id="854945"/>
<dbReference type="KEGG" id="sce:YML058W"/>
<dbReference type="AGR" id="SGD:S000004523"/>
<dbReference type="SGD" id="S000004523">
    <property type="gene designation" value="SML1"/>
</dbReference>
<dbReference type="VEuPathDB" id="FungiDB:YML058W"/>
<dbReference type="eggNOG" id="ENOG502S8G2">
    <property type="taxonomic scope" value="Eukaryota"/>
</dbReference>
<dbReference type="HOGENOM" id="CLU_171972_0_0_1"/>
<dbReference type="InParanoid" id="Q04964"/>
<dbReference type="OMA" id="MWEESVE"/>
<dbReference type="OrthoDB" id="4072855at2759"/>
<dbReference type="BioCyc" id="YEAST:G3O-32653-MONOMER"/>
<dbReference type="BioGRID-ORCS" id="854945">
    <property type="hits" value="9 hits in 10 CRISPR screens"/>
</dbReference>
<dbReference type="PRO" id="PR:Q04964"/>
<dbReference type="Proteomes" id="UP000002311">
    <property type="component" value="Chromosome XIII"/>
</dbReference>
<dbReference type="RNAct" id="Q04964">
    <property type="molecule type" value="protein"/>
</dbReference>
<dbReference type="GO" id="GO:0005737">
    <property type="term" value="C:cytoplasm"/>
    <property type="evidence" value="ECO:0007005"/>
    <property type="project" value="SGD"/>
</dbReference>
<dbReference type="GO" id="GO:0005634">
    <property type="term" value="C:nucleus"/>
    <property type="evidence" value="ECO:0007005"/>
    <property type="project" value="SGD"/>
</dbReference>
<dbReference type="GO" id="GO:1990846">
    <property type="term" value="F:ribonucleoside-diphosphate reductase inhibitor activity"/>
    <property type="evidence" value="ECO:0000314"/>
    <property type="project" value="SGD"/>
</dbReference>
<dbReference type="GO" id="GO:0006974">
    <property type="term" value="P:DNA damage response"/>
    <property type="evidence" value="ECO:0000315"/>
    <property type="project" value="SGD"/>
</dbReference>
<dbReference type="GO" id="GO:0007005">
    <property type="term" value="P:mitochondrion organization"/>
    <property type="evidence" value="ECO:0000315"/>
    <property type="project" value="SGD"/>
</dbReference>
<dbReference type="GO" id="GO:0008156">
    <property type="term" value="P:negative regulation of DNA replication"/>
    <property type="evidence" value="ECO:0007669"/>
    <property type="project" value="UniProtKB-KW"/>
</dbReference>
<dbReference type="DisProt" id="DP01559"/>
<feature type="chain" id="PRO_0000071974" description="Ribonucleotide reductase inhibitor protein SML1">
    <location>
        <begin position="1"/>
        <end position="104"/>
    </location>
</feature>
<feature type="region of interest" description="Disordered" evidence="1">
    <location>
        <begin position="43"/>
        <end position="62"/>
    </location>
</feature>
<feature type="modified residue" description="N-acetylmethionine" evidence="6">
    <location>
        <position position="1"/>
    </location>
</feature>
<feature type="modified residue" description="Phosphoserine; by DUN1" evidence="4">
    <location>
        <position position="56"/>
    </location>
</feature>
<feature type="modified residue" description="Phosphoserine; by DUN1" evidence="4">
    <location>
        <position position="58"/>
    </location>
</feature>
<feature type="modified residue" description="Phosphoserine; by DUN1" evidence="4">
    <location>
        <position position="60"/>
    </location>
</feature>
<feature type="disulfide bond" description="Interchain">
    <location>
        <position position="14"/>
    </location>
</feature>
<feature type="mutagenesis site" description="Increased stability following gamma-irradiation and loss of phosphorylation by DUN1. Causes lethality in rnr1-W688G strain which has a mutation in RNR1." evidence="5">
    <original>SASASS</original>
    <variation>AAAAAA</variation>
    <location>
        <begin position="56"/>
        <end position="61"/>
    </location>
</feature>
<organism>
    <name type="scientific">Saccharomyces cerevisiae (strain ATCC 204508 / S288c)</name>
    <name type="common">Baker's yeast</name>
    <dbReference type="NCBI Taxonomy" id="559292"/>
    <lineage>
        <taxon>Eukaryota</taxon>
        <taxon>Fungi</taxon>
        <taxon>Dikarya</taxon>
        <taxon>Ascomycota</taxon>
        <taxon>Saccharomycotina</taxon>
        <taxon>Saccharomycetes</taxon>
        <taxon>Saccharomycetales</taxon>
        <taxon>Saccharomycetaceae</taxon>
        <taxon>Saccharomyces</taxon>
    </lineage>
</organism>